<comment type="function">
    <text evidence="1">Plays a role in viral genome replication by driving entry of quiescent cells into the cell cycle. Stimulation of progression from G1 to S phase allows the virus to efficiently use the cellular DNA replicating machinery to achieve viral genome replication. E7 protein has both transforming and trans-activating activities. Induces the disassembly of the E2F1 transcription factor from RB1, with subsequent transcriptional activation of E2F1-regulated S-phase genes. Interferes with host histone deacetylation mediated by HDAC1 and HDAC2, leading to transcription activation. Also plays a role in the inhibition of both antiviral and antiproliferative functions of host interferon alpha. Interaction with host TMEM173/STING impairs the ability of TMEM173/STING to sense cytosolic DNA and promote the production of type I interferon (IFN-alpha and IFN-beta).</text>
</comment>
<comment type="subunit">
    <text evidence="1">Homodimer. Homooligomer. Interacts with host RB1; this interaction induces dissociation of RB1-E2F1 complex thereby disrupting RB1 activity. Interacts with host EP300; this interaction represses EP300 transcriptional activity. Interacts with protein E2; this interaction inhibits E7 oncogenic activity. Interacts with host TMEM173/STING; this interaction impairs the ability of TMEM173/STING to sense cytosolic DNA and promote the production of type I interferon (IFN-alpha and IFN-beta).</text>
</comment>
<comment type="interaction">
    <interactant intactId="EBI-963841">
        <id>P06465</id>
    </interactant>
    <interactant intactId="EBI-491274">
        <id>P06400</id>
        <label>RB1</label>
    </interactant>
    <organismsDiffer>true</organismsDiffer>
    <experiments>3</experiments>
</comment>
<comment type="subcellular location">
    <subcellularLocation>
        <location evidence="1">Host cytoplasm</location>
    </subcellularLocation>
    <subcellularLocation>
        <location evidence="1">Host nucleus</location>
    </subcellularLocation>
    <text evidence="1">Predominantly found in the host nucleus.</text>
</comment>
<comment type="domain">
    <text evidence="1">The E7 terminal domain is an intrinsically disordered domain, whose flexibility and conformational transitions confer target adaptability to the oncoprotein. It allows adaptation to a variety of protein targets and exposes the PEST degradation sequence that regulates its turnover in the cell.</text>
</comment>
<comment type="PTM">
    <text evidence="1">Highly phosphorylated.</text>
</comment>
<comment type="similarity">
    <text evidence="1">Belongs to the papillomaviridae E7 protein family.</text>
</comment>
<organismHost>
    <name type="scientific">Homo sapiens</name>
    <name type="common">Human</name>
    <dbReference type="NCBI Taxonomy" id="9606"/>
</organismHost>
<gene>
    <name evidence="1" type="primary">E7</name>
</gene>
<keyword id="KW-0002">3D-structure</keyword>
<keyword id="KW-0010">Activator</keyword>
<keyword id="KW-0238">DNA-binding</keyword>
<keyword id="KW-0244">Early protein</keyword>
<keyword id="KW-1078">G1/S host cell cycle checkpoint dysregulation by virus</keyword>
<keyword id="KW-1035">Host cytoplasm</keyword>
<keyword id="KW-1048">Host nucleus</keyword>
<keyword id="KW-0945">Host-virus interaction</keyword>
<keyword id="KW-1090">Inhibition of host innate immune response by virus</keyword>
<keyword id="KW-1114">Inhibition of host interferon signaling pathway by virus</keyword>
<keyword id="KW-0922">Interferon antiviral system evasion</keyword>
<keyword id="KW-0479">Metal-binding</keyword>
<keyword id="KW-1121">Modulation of host cell cycle by virus</keyword>
<keyword id="KW-0553">Oncogene</keyword>
<keyword id="KW-1185">Reference proteome</keyword>
<keyword id="KW-0804">Transcription</keyword>
<keyword id="KW-0805">Transcription regulation</keyword>
<keyword id="KW-0899">Viral immunoevasion</keyword>
<keyword id="KW-0862">Zinc</keyword>
<keyword id="KW-0863">Zinc-finger</keyword>
<organism>
    <name type="scientific">Human papillomavirus type 1</name>
    <name type="common">Human papillomavirus type 1a</name>
    <dbReference type="NCBI Taxonomy" id="10583"/>
    <lineage>
        <taxon>Viruses</taxon>
        <taxon>Monodnaviria</taxon>
        <taxon>Shotokuvirae</taxon>
        <taxon>Cossaviricota</taxon>
        <taxon>Papovaviricetes</taxon>
        <taxon>Zurhausenvirales</taxon>
        <taxon>Papillomaviridae</taxon>
        <taxon>Firstpapillomavirinae</taxon>
        <taxon>Mupapillomavirus</taxon>
        <taxon>Mupapillomavirus 1</taxon>
    </lineage>
</organism>
<name>VE7_HPV1</name>
<evidence type="ECO:0000255" key="1">
    <source>
        <dbReference type="HAMAP-Rule" id="MF_04004"/>
    </source>
</evidence>
<evidence type="ECO:0007829" key="2">
    <source>
        <dbReference type="PDB" id="2B9D"/>
    </source>
</evidence>
<sequence length="93" mass="10500">MVGEMPALKDLVLQLEPSVLDLDLYCYEEVPPDDIEEELVSPQQPYAVVASCAYCEKLVRLTVLADHSAIRQLEELLLRSLNIVCPLCTLQRQ</sequence>
<proteinExistence type="evidence at protein level"/>
<protein>
    <recommendedName>
        <fullName evidence="1">Protein E7</fullName>
    </recommendedName>
</protein>
<dbReference type="EMBL" id="V01116">
    <property type="protein sequence ID" value="CAA24316.1"/>
    <property type="molecule type" value="Genomic_DNA"/>
</dbReference>
<dbReference type="PIR" id="C17475">
    <property type="entry name" value="W7WL"/>
</dbReference>
<dbReference type="RefSeq" id="NP_040307.1">
    <property type="nucleotide sequence ID" value="NC_001356.1"/>
</dbReference>
<dbReference type="PDB" id="2B9D">
    <property type="method" value="X-ray"/>
    <property type="resolution" value="1.60 A"/>
    <property type="chains" value="A/B=44-93"/>
</dbReference>
<dbReference type="PDBsum" id="2B9D"/>
<dbReference type="SMR" id="P06465"/>
<dbReference type="IntAct" id="P06465">
    <property type="interactions" value="40"/>
</dbReference>
<dbReference type="MINT" id="P06465"/>
<dbReference type="GeneID" id="1489171"/>
<dbReference type="KEGG" id="vg:1489171"/>
<dbReference type="EvolutionaryTrace" id="P06465"/>
<dbReference type="Proteomes" id="UP000006372">
    <property type="component" value="Segment"/>
</dbReference>
<dbReference type="GO" id="GO:0030430">
    <property type="term" value="C:host cell cytoplasm"/>
    <property type="evidence" value="ECO:0007669"/>
    <property type="project" value="UniProtKB-SubCell"/>
</dbReference>
<dbReference type="GO" id="GO:0042025">
    <property type="term" value="C:host cell nucleus"/>
    <property type="evidence" value="ECO:0007669"/>
    <property type="project" value="UniProtKB-SubCell"/>
</dbReference>
<dbReference type="GO" id="GO:0003677">
    <property type="term" value="F:DNA binding"/>
    <property type="evidence" value="ECO:0007669"/>
    <property type="project" value="UniProtKB-UniRule"/>
</dbReference>
<dbReference type="GO" id="GO:0003700">
    <property type="term" value="F:DNA-binding transcription factor activity"/>
    <property type="evidence" value="ECO:0007669"/>
    <property type="project" value="UniProtKB-UniRule"/>
</dbReference>
<dbReference type="GO" id="GO:0019904">
    <property type="term" value="F:protein domain specific binding"/>
    <property type="evidence" value="ECO:0007669"/>
    <property type="project" value="UniProtKB-UniRule"/>
</dbReference>
<dbReference type="GO" id="GO:0008270">
    <property type="term" value="F:zinc ion binding"/>
    <property type="evidence" value="ECO:0007669"/>
    <property type="project" value="UniProtKB-KW"/>
</dbReference>
<dbReference type="GO" id="GO:0006351">
    <property type="term" value="P:DNA-templated transcription"/>
    <property type="evidence" value="ECO:0007669"/>
    <property type="project" value="UniProtKB-UniRule"/>
</dbReference>
<dbReference type="GO" id="GO:0039645">
    <property type="term" value="P:symbiont-mediated perturbation of host cell cycle G1/S transition checkpoint"/>
    <property type="evidence" value="ECO:0007669"/>
    <property type="project" value="UniProtKB-UniRule"/>
</dbReference>
<dbReference type="GO" id="GO:0052170">
    <property type="term" value="P:symbiont-mediated suppression of host innate immune response"/>
    <property type="evidence" value="ECO:0007669"/>
    <property type="project" value="UniProtKB-KW"/>
</dbReference>
<dbReference type="GO" id="GO:0039502">
    <property type="term" value="P:symbiont-mediated suppression of host type I interferon-mediated signaling pathway"/>
    <property type="evidence" value="ECO:0007669"/>
    <property type="project" value="UniProtKB-UniRule"/>
</dbReference>
<dbReference type="Gene3D" id="3.30.160.330">
    <property type="match status" value="1"/>
</dbReference>
<dbReference type="HAMAP" id="MF_04004">
    <property type="entry name" value="PPV_E7"/>
    <property type="match status" value="1"/>
</dbReference>
<dbReference type="InterPro" id="IPR000148">
    <property type="entry name" value="Papilloma_E7"/>
</dbReference>
<dbReference type="Pfam" id="PF00527">
    <property type="entry name" value="E7"/>
    <property type="match status" value="1"/>
</dbReference>
<dbReference type="PIRSF" id="PIRSF003407">
    <property type="entry name" value="Papvi_E7"/>
    <property type="match status" value="1"/>
</dbReference>
<dbReference type="SUPFAM" id="SSF161234">
    <property type="entry name" value="E7 C-terminal domain-like"/>
    <property type="match status" value="1"/>
</dbReference>
<accession>P06465</accession>
<feature type="chain" id="PRO_0000133399" description="Protein E7">
    <location>
        <begin position="1"/>
        <end position="93"/>
    </location>
</feature>
<feature type="zinc finger region" evidence="1">
    <location>
        <begin position="52"/>
        <end position="88"/>
    </location>
</feature>
<feature type="region of interest" description="E7 terminal domain" evidence="1">
    <location>
        <begin position="1"/>
        <end position="41"/>
    </location>
</feature>
<feature type="short sequence motif" description="LXCXE motif; interaction with host RB1 and TMEM173/STING" evidence="1">
    <location>
        <begin position="24"/>
        <end position="28"/>
    </location>
</feature>
<feature type="short sequence motif" description="Nuclear export signal" evidence="1">
    <location>
        <begin position="70"/>
        <end position="78"/>
    </location>
</feature>
<feature type="strand" evidence="2">
    <location>
        <begin position="44"/>
        <end position="51"/>
    </location>
</feature>
<feature type="turn" evidence="2">
    <location>
        <begin position="53"/>
        <end position="55"/>
    </location>
</feature>
<feature type="strand" evidence="2">
    <location>
        <begin position="58"/>
        <end position="65"/>
    </location>
</feature>
<feature type="helix" evidence="2">
    <location>
        <begin position="67"/>
        <end position="78"/>
    </location>
</feature>
<feature type="turn" evidence="2">
    <location>
        <begin position="86"/>
        <end position="90"/>
    </location>
</feature>
<reference key="1">
    <citation type="journal article" date="1982" name="EMBO J.">
        <title>Human papillomavirus 1a complete DNA sequence: a novel type of genome organization among papovaviridae.</title>
        <authorList>
            <person name="Danos O."/>
            <person name="Katinka M."/>
            <person name="Yaniv M."/>
        </authorList>
    </citation>
    <scope>NUCLEOTIDE SEQUENCE [GENOMIC DNA]</scope>
</reference>
<reference key="2">
    <citation type="submission" date="1985-01" db="EMBL/GenBank/DDBJ databases">
        <authorList>
            <person name="Danos O."/>
        </authorList>
    </citation>
    <scope>SEQUENCE REVISION</scope>
</reference>